<organism>
    <name type="scientific">Mus musculus</name>
    <name type="common">Mouse</name>
    <dbReference type="NCBI Taxonomy" id="10090"/>
    <lineage>
        <taxon>Eukaryota</taxon>
        <taxon>Metazoa</taxon>
        <taxon>Chordata</taxon>
        <taxon>Craniata</taxon>
        <taxon>Vertebrata</taxon>
        <taxon>Euteleostomi</taxon>
        <taxon>Mammalia</taxon>
        <taxon>Eutheria</taxon>
        <taxon>Euarchontoglires</taxon>
        <taxon>Glires</taxon>
        <taxon>Rodentia</taxon>
        <taxon>Myomorpha</taxon>
        <taxon>Muroidea</taxon>
        <taxon>Muridae</taxon>
        <taxon>Murinae</taxon>
        <taxon>Mus</taxon>
        <taxon>Mus</taxon>
    </lineage>
</organism>
<gene>
    <name type="primary">Ctsg</name>
</gene>
<name>CATG_MOUSE</name>
<sequence length="261" mass="29096">MQPLLLLLTFILLQGDEAGKIIGGREARPHSYPYMAFLLIQSPEGLSACGGFLVREDFVLTAAHCLGSSINVTLGAHNIQMRERTQQLITVLRAIRHPDYNPQNIRNDIMLLQLRRRARRSGSVKPVALPQASKKLQPGDLCTVAGWGRVSQSRGTNVLQEVQLRVQMDQMCANRFQFYNSQTQICVGNPRERKSAFRGDSGGPLVCSNVAQGIVSYGSNNGNPPAVFTKIQSFMPWIKRTMRRFAPRYQRPANSLSQAQT</sequence>
<dbReference type="EC" id="3.4.21.20" evidence="1"/>
<dbReference type="EMBL" id="M96801">
    <property type="protein sequence ID" value="AAA37376.1"/>
    <property type="molecule type" value="Genomic_DNA"/>
</dbReference>
<dbReference type="EMBL" id="X70057">
    <property type="protein sequence ID" value="CAA49661.1"/>
    <property type="molecule type" value="Genomic_DNA"/>
</dbReference>
<dbReference type="EMBL" id="X78544">
    <property type="protein sequence ID" value="CAA55290.1"/>
    <property type="molecule type" value="mRNA"/>
</dbReference>
<dbReference type="CCDS" id="CCDS27142.1"/>
<dbReference type="PIR" id="S40162">
    <property type="entry name" value="S40162"/>
</dbReference>
<dbReference type="RefSeq" id="NP_031826.1">
    <property type="nucleotide sequence ID" value="NM_007800.2"/>
</dbReference>
<dbReference type="SMR" id="P28293"/>
<dbReference type="BioGRID" id="198972">
    <property type="interactions" value="7"/>
</dbReference>
<dbReference type="FunCoup" id="P28293">
    <property type="interactions" value="1046"/>
</dbReference>
<dbReference type="STRING" id="10090.ENSMUSP00000015583"/>
<dbReference type="BindingDB" id="P28293"/>
<dbReference type="ChEMBL" id="CHEMBL5622"/>
<dbReference type="MEROPS" id="S01.133"/>
<dbReference type="GlyCosmos" id="P28293">
    <property type="glycosylation" value="1 site, No reported glycans"/>
</dbReference>
<dbReference type="GlyGen" id="P28293">
    <property type="glycosylation" value="2 sites, 1 O-linked glycan (1 site)"/>
</dbReference>
<dbReference type="PhosphoSitePlus" id="P28293"/>
<dbReference type="jPOST" id="P28293"/>
<dbReference type="PaxDb" id="10090-ENSMUSP00000015583"/>
<dbReference type="PeptideAtlas" id="P28293"/>
<dbReference type="ProteomicsDB" id="281222"/>
<dbReference type="Antibodypedia" id="3597">
    <property type="antibodies" value="411 antibodies from 35 providers"/>
</dbReference>
<dbReference type="DNASU" id="13035"/>
<dbReference type="Ensembl" id="ENSMUST00000015583.2">
    <property type="protein sequence ID" value="ENSMUSP00000015583.2"/>
    <property type="gene ID" value="ENSMUSG00000040314.3"/>
</dbReference>
<dbReference type="GeneID" id="13035"/>
<dbReference type="KEGG" id="mmu:13035"/>
<dbReference type="UCSC" id="uc007ubn.1">
    <property type="organism name" value="mouse"/>
</dbReference>
<dbReference type="AGR" id="MGI:88563"/>
<dbReference type="CTD" id="1511"/>
<dbReference type="MGI" id="MGI:88563">
    <property type="gene designation" value="Ctsg"/>
</dbReference>
<dbReference type="VEuPathDB" id="HostDB:ENSMUSG00000040314"/>
<dbReference type="eggNOG" id="KOG3627">
    <property type="taxonomic scope" value="Eukaryota"/>
</dbReference>
<dbReference type="GeneTree" id="ENSGT01030000234551"/>
<dbReference type="HOGENOM" id="CLU_006842_1_0_1"/>
<dbReference type="InParanoid" id="P28293"/>
<dbReference type="OMA" id="QLDQMEI"/>
<dbReference type="OrthoDB" id="5565075at2759"/>
<dbReference type="PhylomeDB" id="P28293"/>
<dbReference type="TreeFam" id="TF333630"/>
<dbReference type="BRENDA" id="3.4.21.20">
    <property type="organism ID" value="3474"/>
</dbReference>
<dbReference type="Reactome" id="R-MMU-1474228">
    <property type="pathway name" value="Degradation of the extracellular matrix"/>
</dbReference>
<dbReference type="Reactome" id="R-MMU-1592389">
    <property type="pathway name" value="Activation of Matrix Metalloproteinases"/>
</dbReference>
<dbReference type="Reactome" id="R-MMU-2022377">
    <property type="pathway name" value="Metabolism of Angiotensinogen to Angiotensins"/>
</dbReference>
<dbReference type="Reactome" id="R-MMU-448706">
    <property type="pathway name" value="Interleukin-1 processing"/>
</dbReference>
<dbReference type="Reactome" id="R-MMU-6798695">
    <property type="pathway name" value="Neutrophil degranulation"/>
</dbReference>
<dbReference type="Reactome" id="R-MMU-6803157">
    <property type="pathway name" value="Antimicrobial peptides"/>
</dbReference>
<dbReference type="BioGRID-ORCS" id="13035">
    <property type="hits" value="1 hit in 78 CRISPR screens"/>
</dbReference>
<dbReference type="PRO" id="PR:P28293"/>
<dbReference type="Proteomes" id="UP000000589">
    <property type="component" value="Chromosome 14"/>
</dbReference>
<dbReference type="RNAct" id="P28293">
    <property type="molecule type" value="protein"/>
</dbReference>
<dbReference type="Bgee" id="ENSMUSG00000040314">
    <property type="expression patterns" value="Expressed in femorotibial joint and 35 other cell types or tissues"/>
</dbReference>
<dbReference type="ExpressionAtlas" id="P28293">
    <property type="expression patterns" value="baseline and differential"/>
</dbReference>
<dbReference type="GO" id="GO:0010494">
    <property type="term" value="C:cytoplasmic stress granule"/>
    <property type="evidence" value="ECO:0007669"/>
    <property type="project" value="Ensembl"/>
</dbReference>
<dbReference type="GO" id="GO:0005829">
    <property type="term" value="C:cytosol"/>
    <property type="evidence" value="ECO:0000250"/>
    <property type="project" value="UniProtKB"/>
</dbReference>
<dbReference type="GO" id="GO:0005615">
    <property type="term" value="C:extracellular space"/>
    <property type="evidence" value="ECO:0000250"/>
    <property type="project" value="UniProtKB"/>
</dbReference>
<dbReference type="GO" id="GO:0005764">
    <property type="term" value="C:lysosome"/>
    <property type="evidence" value="ECO:0000250"/>
    <property type="project" value="UniProtKB"/>
</dbReference>
<dbReference type="GO" id="GO:0016020">
    <property type="term" value="C:membrane"/>
    <property type="evidence" value="ECO:0000250"/>
    <property type="project" value="UniProtKB"/>
</dbReference>
<dbReference type="GO" id="GO:0005634">
    <property type="term" value="C:nucleus"/>
    <property type="evidence" value="ECO:0000250"/>
    <property type="project" value="UniProtKB"/>
</dbReference>
<dbReference type="GO" id="GO:0005886">
    <property type="term" value="C:plasma membrane"/>
    <property type="evidence" value="ECO:0007669"/>
    <property type="project" value="UniProtKB-SubCell"/>
</dbReference>
<dbReference type="GO" id="GO:0030141">
    <property type="term" value="C:secretory granule"/>
    <property type="evidence" value="ECO:0000266"/>
    <property type="project" value="MGI"/>
</dbReference>
<dbReference type="GO" id="GO:0089720">
    <property type="term" value="F:caspase binding"/>
    <property type="evidence" value="ECO:0000250"/>
    <property type="project" value="UniProtKB"/>
</dbReference>
<dbReference type="GO" id="GO:0008201">
    <property type="term" value="F:heparin binding"/>
    <property type="evidence" value="ECO:0000266"/>
    <property type="project" value="MGI"/>
</dbReference>
<dbReference type="GO" id="GO:0008233">
    <property type="term" value="F:peptidase activity"/>
    <property type="evidence" value="ECO:0000266"/>
    <property type="project" value="MGI"/>
</dbReference>
<dbReference type="GO" id="GO:0048018">
    <property type="term" value="F:receptor ligand activity"/>
    <property type="evidence" value="ECO:0000250"/>
    <property type="project" value="UniProtKB"/>
</dbReference>
<dbReference type="GO" id="GO:0004252">
    <property type="term" value="F:serine-type endopeptidase activity"/>
    <property type="evidence" value="ECO:0000250"/>
    <property type="project" value="UniProtKB"/>
</dbReference>
<dbReference type="GO" id="GO:0019731">
    <property type="term" value="P:antibacterial humoral response"/>
    <property type="evidence" value="ECO:0007669"/>
    <property type="project" value="Ensembl"/>
</dbReference>
<dbReference type="GO" id="GO:0098786">
    <property type="term" value="P:biofilm matrix disassembly"/>
    <property type="evidence" value="ECO:0000250"/>
    <property type="project" value="UniProtKB"/>
</dbReference>
<dbReference type="GO" id="GO:0071222">
    <property type="term" value="P:cellular response to lipopolysaccharide"/>
    <property type="evidence" value="ECO:0007669"/>
    <property type="project" value="Ensembl"/>
</dbReference>
<dbReference type="GO" id="GO:0050832">
    <property type="term" value="P:defense response to fungus"/>
    <property type="evidence" value="ECO:0000315"/>
    <property type="project" value="MGI"/>
</dbReference>
<dbReference type="GO" id="GO:0050829">
    <property type="term" value="P:defense response to Gram-negative bacterium"/>
    <property type="evidence" value="ECO:0000250"/>
    <property type="project" value="UniProtKB"/>
</dbReference>
<dbReference type="GO" id="GO:0050830">
    <property type="term" value="P:defense response to Gram-positive bacterium"/>
    <property type="evidence" value="ECO:0000315"/>
    <property type="project" value="MGI"/>
</dbReference>
<dbReference type="GO" id="GO:0002548">
    <property type="term" value="P:monocyte chemotaxis"/>
    <property type="evidence" value="ECO:0000250"/>
    <property type="project" value="UniProtKB"/>
</dbReference>
<dbReference type="GO" id="GO:0050868">
    <property type="term" value="P:negative regulation of T cell activation"/>
    <property type="evidence" value="ECO:0000250"/>
    <property type="project" value="UniProtKB"/>
</dbReference>
<dbReference type="GO" id="GO:0042119">
    <property type="term" value="P:neutrophil activation"/>
    <property type="evidence" value="ECO:0000250"/>
    <property type="project" value="UniProtKB"/>
</dbReference>
<dbReference type="GO" id="GO:0070946">
    <property type="term" value="P:neutrophil-mediated killing of gram-positive bacterium"/>
    <property type="evidence" value="ECO:0000315"/>
    <property type="project" value="MGI"/>
</dbReference>
<dbReference type="GO" id="GO:0030168">
    <property type="term" value="P:platelet activation"/>
    <property type="evidence" value="ECO:0000250"/>
    <property type="project" value="UniProtKB"/>
</dbReference>
<dbReference type="GO" id="GO:0050778">
    <property type="term" value="P:positive regulation of immune response"/>
    <property type="evidence" value="ECO:0000315"/>
    <property type="project" value="MGI"/>
</dbReference>
<dbReference type="GO" id="GO:1901731">
    <property type="term" value="P:positive regulation of platelet aggregation"/>
    <property type="evidence" value="ECO:0000250"/>
    <property type="project" value="UniProtKB"/>
</dbReference>
<dbReference type="GO" id="GO:0016485">
    <property type="term" value="P:protein processing"/>
    <property type="evidence" value="ECO:0000250"/>
    <property type="project" value="UniProtKB"/>
</dbReference>
<dbReference type="GO" id="GO:0006508">
    <property type="term" value="P:proteolysis"/>
    <property type="evidence" value="ECO:0000250"/>
    <property type="project" value="UniProtKB"/>
</dbReference>
<dbReference type="GO" id="GO:0032496">
    <property type="term" value="P:response to lipopolysaccharide"/>
    <property type="evidence" value="ECO:0000315"/>
    <property type="project" value="MGI"/>
</dbReference>
<dbReference type="CDD" id="cd00190">
    <property type="entry name" value="Tryp_SPc"/>
    <property type="match status" value="1"/>
</dbReference>
<dbReference type="FunFam" id="2.40.10.10:FF:000014">
    <property type="entry name" value="Complement factor D"/>
    <property type="match status" value="1"/>
</dbReference>
<dbReference type="FunFam" id="2.40.10.10:FF:000068">
    <property type="entry name" value="transmembrane protease serine 2"/>
    <property type="match status" value="1"/>
</dbReference>
<dbReference type="Gene3D" id="2.40.10.10">
    <property type="entry name" value="Trypsin-like serine proteases"/>
    <property type="match status" value="2"/>
</dbReference>
<dbReference type="InterPro" id="IPR009003">
    <property type="entry name" value="Peptidase_S1_PA"/>
</dbReference>
<dbReference type="InterPro" id="IPR043504">
    <property type="entry name" value="Peptidase_S1_PA_chymotrypsin"/>
</dbReference>
<dbReference type="InterPro" id="IPR001314">
    <property type="entry name" value="Peptidase_S1A"/>
</dbReference>
<dbReference type="InterPro" id="IPR001254">
    <property type="entry name" value="Trypsin_dom"/>
</dbReference>
<dbReference type="InterPro" id="IPR018114">
    <property type="entry name" value="TRYPSIN_HIS"/>
</dbReference>
<dbReference type="InterPro" id="IPR033116">
    <property type="entry name" value="TRYPSIN_SER"/>
</dbReference>
<dbReference type="PANTHER" id="PTHR24271:SF13">
    <property type="entry name" value="CATHEPSIN G"/>
    <property type="match status" value="1"/>
</dbReference>
<dbReference type="PANTHER" id="PTHR24271">
    <property type="entry name" value="KALLIKREIN-RELATED"/>
    <property type="match status" value="1"/>
</dbReference>
<dbReference type="Pfam" id="PF00089">
    <property type="entry name" value="Trypsin"/>
    <property type="match status" value="1"/>
</dbReference>
<dbReference type="PRINTS" id="PR00722">
    <property type="entry name" value="CHYMOTRYPSIN"/>
</dbReference>
<dbReference type="SMART" id="SM00020">
    <property type="entry name" value="Tryp_SPc"/>
    <property type="match status" value="1"/>
</dbReference>
<dbReference type="SUPFAM" id="SSF50494">
    <property type="entry name" value="Trypsin-like serine proteases"/>
    <property type="match status" value="1"/>
</dbReference>
<dbReference type="PROSITE" id="PS50240">
    <property type="entry name" value="TRYPSIN_DOM"/>
    <property type="match status" value="1"/>
</dbReference>
<dbReference type="PROSITE" id="PS00134">
    <property type="entry name" value="TRYPSIN_HIS"/>
    <property type="match status" value="1"/>
</dbReference>
<dbReference type="PROSITE" id="PS00135">
    <property type="entry name" value="TRYPSIN_SER"/>
    <property type="match status" value="1"/>
</dbReference>
<proteinExistence type="evidence at protein level"/>
<reference key="1">
    <citation type="journal article" date="1993" name="Blood">
        <title>Molecular cloning, chromosomal location, and tissue-specific expression of the murine cathepsin G gene.</title>
        <authorList>
            <person name="Heusel J.W."/>
            <person name="Scarpati E.M."/>
            <person name="Jenkins N.A."/>
            <person name="Gilbert D.J."/>
            <person name="Copeland N.G."/>
            <person name="Shapiro S.D."/>
            <person name="Ley T.J."/>
        </authorList>
    </citation>
    <scope>NUCLEOTIDE SEQUENCE [GENOMIC DNA]</scope>
    <scope>TISSUE SPECIFICITY</scope>
    <source>
        <strain>Swiss Webster</strain>
        <tissue>Embryonic fibroblast</tissue>
    </source>
</reference>
<reference key="2">
    <citation type="submission" date="1992-12" db="EMBL/GenBank/DDBJ databases">
        <authorList>
            <person name="Kulmburg P."/>
            <person name="Baumruker T."/>
            <person name="Werner F."/>
        </authorList>
    </citation>
    <scope>NUCLEOTIDE SEQUENCE [GENOMIC DNA]</scope>
</reference>
<reference key="3">
    <citation type="journal article" date="1997" name="Immunogenetics">
        <title>Characterization of cDNA clones encoding mouse proteinase 3 (myeloblastine) and cathepsin G.</title>
        <authorList>
            <person name="Aveskogh M."/>
            <person name="Lutzelschwab C."/>
            <person name="Huang M.R."/>
            <person name="Hellman L."/>
        </authorList>
    </citation>
    <scope>NUCLEOTIDE SEQUENCE [MRNA]</scope>
    <source>
        <strain>C57L/J</strain>
    </source>
</reference>
<reference key="4">
    <citation type="journal article" date="1992" name="Eur. J. Biochem.">
        <title>Purification and characterization of a vimentin-specific protease in mouse myeloid leukemia cells. Regulation during differentiation and identity with cathepsin G.</title>
        <authorList>
            <person name="Nakamura N."/>
            <person name="Tsuru A."/>
            <person name="Hirayoshi K."/>
            <person name="Nagata K."/>
        </authorList>
    </citation>
    <scope>PROTEIN SEQUENCE OF 21-60</scope>
    <scope>FUNCTION</scope>
    <scope>ACTIVITY REGULATION</scope>
</reference>
<protein>
    <recommendedName>
        <fullName>Cathepsin G</fullName>
        <ecNumber evidence="1">3.4.21.20</ecNumber>
    </recommendedName>
    <alternativeName>
        <fullName evidence="6">Vimentin-specific protease</fullName>
        <shortName evidence="6">VSP</shortName>
    </alternativeName>
</protein>
<keyword id="KW-0044">Antibiotic</keyword>
<keyword id="KW-0929">Antimicrobial</keyword>
<keyword id="KW-1003">Cell membrane</keyword>
<keyword id="KW-0145">Chemotaxis</keyword>
<keyword id="KW-0963">Cytoplasm</keyword>
<keyword id="KW-0903">Direct protein sequencing</keyword>
<keyword id="KW-1015">Disulfide bond</keyword>
<keyword id="KW-0325">Glycoprotein</keyword>
<keyword id="KW-0378">Hydrolase</keyword>
<keyword id="KW-0458">Lysosome</keyword>
<keyword id="KW-0472">Membrane</keyword>
<keyword id="KW-0539">Nucleus</keyword>
<keyword id="KW-0645">Protease</keyword>
<keyword id="KW-1185">Reference proteome</keyword>
<keyword id="KW-0964">Secreted</keyword>
<keyword id="KW-0720">Serine protease</keyword>
<keyword id="KW-0732">Signal</keyword>
<keyword id="KW-0865">Zymogen</keyword>
<feature type="signal peptide" evidence="2">
    <location>
        <begin position="1"/>
        <end position="18"/>
    </location>
</feature>
<feature type="propeptide" id="PRO_0000027514" description="Activation peptide" evidence="4">
    <location>
        <begin position="19"/>
        <end position="20"/>
    </location>
</feature>
<feature type="chain" id="PRO_0000027515" description="Cathepsin G">
    <location>
        <begin position="21"/>
        <end position="261"/>
    </location>
</feature>
<feature type="domain" description="Peptidase S1" evidence="3">
    <location>
        <begin position="21"/>
        <end position="243"/>
    </location>
</feature>
<feature type="region of interest" description="Important for antimicrobial activity" evidence="1">
    <location>
        <begin position="21"/>
        <end position="25"/>
    </location>
</feature>
<feature type="region of interest" description="Important for antimicrobial activity" evidence="1">
    <location>
        <begin position="97"/>
        <end position="111"/>
    </location>
</feature>
<feature type="active site" description="Charge relay system" evidence="3">
    <location>
        <position position="64"/>
    </location>
</feature>
<feature type="active site" description="Charge relay system" evidence="3">
    <location>
        <position position="108"/>
    </location>
</feature>
<feature type="active site" description="Charge relay system" evidence="3">
    <location>
        <position position="201"/>
    </location>
</feature>
<feature type="glycosylation site" description="N-linked (GlcNAc...) asparagine" evidence="2">
    <location>
        <position position="71"/>
    </location>
</feature>
<feature type="disulfide bond" evidence="3">
    <location>
        <begin position="49"/>
        <end position="65"/>
    </location>
</feature>
<feature type="disulfide bond" evidence="3">
    <location>
        <begin position="142"/>
        <end position="207"/>
    </location>
</feature>
<feature type="disulfide bond" evidence="3">
    <location>
        <begin position="172"/>
        <end position="186"/>
    </location>
</feature>
<feature type="sequence conflict" description="In Ref. 4; AA sequence." evidence="7" ref="4">
    <original>G</original>
    <variation>S</variation>
    <location>
        <position position="51"/>
    </location>
</feature>
<feature type="sequence conflict" description="In Ref. 4; AA sequence." evidence="7" ref="4">
    <original>E</original>
    <variation>G</variation>
    <location>
        <position position="56"/>
    </location>
</feature>
<feature type="sequence conflict" description="In Ref. 4; AA sequence." evidence="7" ref="4">
    <original>L</original>
    <variation>P</variation>
    <location>
        <position position="60"/>
    </location>
</feature>
<evidence type="ECO:0000250" key="1">
    <source>
        <dbReference type="UniProtKB" id="P08311"/>
    </source>
</evidence>
<evidence type="ECO:0000255" key="2"/>
<evidence type="ECO:0000255" key="3">
    <source>
        <dbReference type="PROSITE-ProRule" id="PRU00274"/>
    </source>
</evidence>
<evidence type="ECO:0000269" key="4">
    <source>
    </source>
</evidence>
<evidence type="ECO:0000269" key="5">
    <source>
    </source>
</evidence>
<evidence type="ECO:0000303" key="6">
    <source>
    </source>
</evidence>
<evidence type="ECO:0000305" key="7"/>
<accession>P28293</accession>
<comment type="function">
    <text evidence="1 4">Serine protease with trypsin- and chymotrypsin-like specificity. Also displays antibacterial activity against Gram-negative and Gram-positive bacteria independent of its protease activity. Prefers Phe and Tyr residues in the P1 position of substrates but also cleaves efficiently after Trp and Leu. Shows a preference for negatively charged amino acids in the P2' position and for aliphatic amino acids both upstream and downstream of the cleavage site. Required for recruitment and activation of platelets which is mediated by the F2RL3/PAR4 platelet receptor. Binds reversibly to and stimulates B cells and CD4(+) and CD8(+) T cells. Also binds reversibly to natural killer (NK) cells and enhances NK cell cytotoxicity through its protease activity. Cleaves complement C3 (By similarity). Cleaves vimentin (PubMed:1577012). Cleaves thrombin receptor F2R/PAR1. Cleaves the synovial mucin-type protein PRG4/lubricin. Cleaves and activates IL36G which promotes expression of chemokines CXCL1 and CXLC8 in keratinocytes. Cleaves IL33 into mature forms which have greater activity than the unprocessed form. Cleaves coagulation factor F8 to produce a partially activated form. Also cleaves and activates coagulation factor F10. Cleaves leukocyte cell surface protein SPN/CD43 to release its extracellular domain and trigger its intramembrane proteolysis by gamma-secretase, releasing the CD43 cytoplasmic tail chain (CD43-ct) which translocates to the nucleus. During apoptosis, cleaves SMARCA2/BRM to produce a 160 kDa cleavage product which localizes to the cytosol. Cleaves MBP in B cell lysosomes at '221-Phe-|-Lys-222', degrading the major immunogenic MBP epitope and preventing the activation of MBP-specific autoreactive T cells. Cleaves annexin ANXA1 and antimicrobial peptide CAMP to produce peptides which act on neutrophil N-formyl peptide receptors to enhance the release of CXCL2. Acts as a ligand for the N-formyl peptide receptor FPR1, enhancing phagocyte chemotaxis. Has antibacterial activity against the Gram-negative bacteria N.gonorrhoeae and P.aeruginosa. Likely to act against N.gonorrhoeae by interacting with N.gonorrhoeae penA/PBP2. Exhibits potent antimicrobial activity against the Gram-positive bacterium L.monocytogenes. Has antibacterial activity against the Gram-positive bacterium S.aureus and degrades S.aureus biofilms, allowing polymorphonuclear leukocytes to penetrate the biofilm and phagocytose bacteria. Has antibacterial activity against M.tuberculosis (By similarity). Induces platelet aggregation which is strongly potentiated in the presence of ELANE (By similarity).</text>
</comment>
<comment type="catalytic activity">
    <reaction evidence="1">
        <text>Specificity similar to chymotrypsin C.</text>
        <dbReference type="EC" id="3.4.21.20"/>
    </reaction>
</comment>
<comment type="activity regulation">
    <text evidence="4">Inhibited by chymostatin, phenylmethanesulfonyl fluoride and diisopropyl fluorophosphate.</text>
</comment>
<comment type="subcellular location">
    <subcellularLocation>
        <location evidence="1">Cell membrane</location>
        <topology evidence="7">Peripheral membrane protein</topology>
    </subcellularLocation>
    <subcellularLocation>
        <location evidence="1">Cytoplasmic granule</location>
    </subcellularLocation>
    <subcellularLocation>
        <location evidence="1">Secreted</location>
    </subcellularLocation>
    <subcellularLocation>
        <location evidence="1">Cytoplasm</location>
        <location evidence="1">Cytosol</location>
    </subcellularLocation>
    <subcellularLocation>
        <location evidence="1">Lysosome</location>
    </subcellularLocation>
    <subcellularLocation>
        <location evidence="1">Nucleus</location>
    </subcellularLocation>
    <text evidence="1">Secreted by activated neutrophils. Detected in synovial fluid. Localizes to lysosomes in B cells where it is not endogenously synthesized but is internalized from the cell membrane. Localizes to the nucleus during apoptosis.</text>
</comment>
<comment type="tissue specificity">
    <text evidence="5">In adult, detected only in bone marrow where expression is restricted to a small population of early myeloid cells.</text>
</comment>
<comment type="similarity">
    <text evidence="3">Belongs to the peptidase S1 family.</text>
</comment>